<dbReference type="EMBL" id="AF166003">
    <property type="protein sequence ID" value="AAF65516.1"/>
    <property type="molecule type" value="mRNA"/>
</dbReference>
<dbReference type="EMBL" id="AF166006">
    <property type="protein sequence ID" value="AAF65617.1"/>
    <property type="molecule type" value="Genomic_DNA"/>
</dbReference>
<dbReference type="EMBL" id="AF166004">
    <property type="protein sequence ID" value="AAF65617.1"/>
    <property type="status" value="JOINED"/>
    <property type="molecule type" value="Genomic_DNA"/>
</dbReference>
<dbReference type="EMBL" id="AF166005">
    <property type="protein sequence ID" value="AAF65617.1"/>
    <property type="status" value="JOINED"/>
    <property type="molecule type" value="Genomic_DNA"/>
</dbReference>
<dbReference type="EMBL" id="AB021865">
    <property type="protein sequence ID" value="BAA96454.1"/>
    <property type="molecule type" value="mRNA"/>
</dbReference>
<dbReference type="EMBL" id="AJ005898">
    <property type="protein sequence ID" value="CAA06755.1"/>
    <property type="molecule type" value="mRNA"/>
</dbReference>
<dbReference type="EMBL" id="AK094431">
    <property type="protein sequence ID" value="BAG52865.1"/>
    <property type="molecule type" value="mRNA"/>
</dbReference>
<dbReference type="EMBL" id="AK315092">
    <property type="protein sequence ID" value="BAG37557.1"/>
    <property type="molecule type" value="mRNA"/>
</dbReference>
<dbReference type="EMBL" id="AF207550">
    <property type="status" value="NOT_ANNOTATED_CDS"/>
    <property type="molecule type" value="Genomic_DNA"/>
</dbReference>
<dbReference type="EMBL" id="CH471224">
    <property type="protein sequence ID" value="EAW50720.1"/>
    <property type="molecule type" value="Genomic_DNA"/>
</dbReference>
<dbReference type="EMBL" id="CH471224">
    <property type="protein sequence ID" value="EAW50721.1"/>
    <property type="molecule type" value="Genomic_DNA"/>
</dbReference>
<dbReference type="EMBL" id="BC045659">
    <property type="protein sequence ID" value="AAH45659.1"/>
    <property type="molecule type" value="mRNA"/>
</dbReference>
<dbReference type="CCDS" id="CCDS14314.1">
    <molecule id="Q9NSA2-1"/>
</dbReference>
<dbReference type="RefSeq" id="NP_004970.3">
    <molecule id="Q9NSA2-1"/>
    <property type="nucleotide sequence ID" value="NM_004979.5"/>
</dbReference>
<dbReference type="RefSeq" id="XP_011542212.1">
    <property type="nucleotide sequence ID" value="XM_011543910.2"/>
</dbReference>
<dbReference type="SMR" id="Q9NSA2"/>
<dbReference type="BioGRID" id="109952">
    <property type="interactions" value="1"/>
</dbReference>
<dbReference type="FunCoup" id="Q9NSA2">
    <property type="interactions" value="20"/>
</dbReference>
<dbReference type="IntAct" id="Q9NSA2">
    <property type="interactions" value="1"/>
</dbReference>
<dbReference type="STRING" id="9606.ENSP00000218176"/>
<dbReference type="ChEMBL" id="CHEMBL2362996"/>
<dbReference type="DrugBank" id="DB06637">
    <property type="generic name" value="Dalfampridine"/>
</dbReference>
<dbReference type="DrugBank" id="DB00228">
    <property type="generic name" value="Enflurane"/>
</dbReference>
<dbReference type="DrugBank" id="DB01110">
    <property type="generic name" value="Miconazole"/>
</dbReference>
<dbReference type="DrugBank" id="DB01069">
    <property type="generic name" value="Promethazine"/>
</dbReference>
<dbReference type="DrugCentral" id="Q9NSA2"/>
<dbReference type="GuidetoPHARMACOLOGY" id="552"/>
<dbReference type="TCDB" id="1.A.1.2.28">
    <property type="family name" value="the voltage-gated ion channel (vic) superfamily"/>
</dbReference>
<dbReference type="GlyCosmos" id="Q9NSA2">
    <property type="glycosylation" value="2 sites, No reported glycans"/>
</dbReference>
<dbReference type="GlyGen" id="Q9NSA2">
    <property type="glycosylation" value="2 sites"/>
</dbReference>
<dbReference type="iPTMnet" id="Q9NSA2"/>
<dbReference type="PhosphoSitePlus" id="Q9NSA2"/>
<dbReference type="BioMuta" id="KCND1"/>
<dbReference type="DMDM" id="38258256"/>
<dbReference type="jPOST" id="Q9NSA2"/>
<dbReference type="MassIVE" id="Q9NSA2"/>
<dbReference type="PaxDb" id="9606-ENSP00000218176"/>
<dbReference type="PeptideAtlas" id="Q9NSA2"/>
<dbReference type="ProteomicsDB" id="82521">
    <molecule id="Q9NSA2-1"/>
</dbReference>
<dbReference type="ProteomicsDB" id="980"/>
<dbReference type="Antibodypedia" id="370">
    <property type="antibodies" value="254 antibodies from 31 providers"/>
</dbReference>
<dbReference type="DNASU" id="3750"/>
<dbReference type="Ensembl" id="ENST00000218176.4">
    <molecule id="Q9NSA2-1"/>
    <property type="protein sequence ID" value="ENSP00000218176.3"/>
    <property type="gene ID" value="ENSG00000102057.11"/>
</dbReference>
<dbReference type="Ensembl" id="ENST00000376477.6">
    <molecule id="Q9NSA2-2"/>
    <property type="protein sequence ID" value="ENSP00000365660.1"/>
    <property type="gene ID" value="ENSG00000102057.11"/>
</dbReference>
<dbReference type="Ensembl" id="ENST00000710081.1">
    <molecule id="Q9NSA2-2"/>
    <property type="protein sequence ID" value="ENSP00000518043.1"/>
    <property type="gene ID" value="ENSG00000292214.1"/>
</dbReference>
<dbReference type="Ensembl" id="ENST00000710082.1">
    <molecule id="Q9NSA2-1"/>
    <property type="protein sequence ID" value="ENSP00000518044.1"/>
    <property type="gene ID" value="ENSG00000292214.1"/>
</dbReference>
<dbReference type="GeneID" id="3750"/>
<dbReference type="KEGG" id="hsa:3750"/>
<dbReference type="MANE-Select" id="ENST00000218176.4">
    <property type="protein sequence ID" value="ENSP00000218176.3"/>
    <property type="RefSeq nucleotide sequence ID" value="NM_004979.6"/>
    <property type="RefSeq protein sequence ID" value="NP_004970.3"/>
</dbReference>
<dbReference type="UCSC" id="uc004dlw.1">
    <molecule id="Q9NSA2-1"/>
    <property type="organism name" value="human"/>
</dbReference>
<dbReference type="AGR" id="HGNC:6237"/>
<dbReference type="CTD" id="3750"/>
<dbReference type="DisGeNET" id="3750"/>
<dbReference type="GeneCards" id="KCND1"/>
<dbReference type="HGNC" id="HGNC:6237">
    <property type="gene designation" value="KCND1"/>
</dbReference>
<dbReference type="HPA" id="ENSG00000102057">
    <property type="expression patterns" value="Tissue enhanced (brain)"/>
</dbReference>
<dbReference type="MIM" id="300281">
    <property type="type" value="gene"/>
</dbReference>
<dbReference type="neXtProt" id="NX_Q9NSA2"/>
<dbReference type="OpenTargets" id="ENSG00000102057"/>
<dbReference type="PharmGKB" id="PA30029"/>
<dbReference type="VEuPathDB" id="HostDB:ENSG00000102057"/>
<dbReference type="eggNOG" id="KOG4390">
    <property type="taxonomic scope" value="Eukaryota"/>
</dbReference>
<dbReference type="GeneTree" id="ENSGT00940000162057"/>
<dbReference type="HOGENOM" id="CLU_070236_0_0_1"/>
<dbReference type="InParanoid" id="Q9NSA2"/>
<dbReference type="OMA" id="RFPMAFF"/>
<dbReference type="OrthoDB" id="433309at2759"/>
<dbReference type="PAN-GO" id="Q9NSA2">
    <property type="GO annotations" value="7 GO annotations based on evolutionary models"/>
</dbReference>
<dbReference type="PhylomeDB" id="Q9NSA2"/>
<dbReference type="TreeFam" id="TF313103"/>
<dbReference type="PathwayCommons" id="Q9NSA2"/>
<dbReference type="Reactome" id="R-HSA-1296072">
    <property type="pathway name" value="Voltage gated Potassium channels"/>
</dbReference>
<dbReference type="Reactome" id="R-HSA-5576894">
    <property type="pathway name" value="Phase 1 - inactivation of fast Na+ channels"/>
</dbReference>
<dbReference type="SignaLink" id="Q9NSA2"/>
<dbReference type="BioGRID-ORCS" id="3750">
    <property type="hits" value="8 hits in 783 CRISPR screens"/>
</dbReference>
<dbReference type="ChiTaRS" id="KCND1">
    <property type="organism name" value="human"/>
</dbReference>
<dbReference type="GeneWiki" id="KCND1"/>
<dbReference type="GenomeRNAi" id="3750"/>
<dbReference type="Pharos" id="Q9NSA2">
    <property type="development level" value="Tclin"/>
</dbReference>
<dbReference type="PRO" id="PR:Q9NSA2"/>
<dbReference type="Proteomes" id="UP000005640">
    <property type="component" value="Chromosome X"/>
</dbReference>
<dbReference type="RNAct" id="Q9NSA2">
    <property type="molecule type" value="protein"/>
</dbReference>
<dbReference type="Bgee" id="ENSG00000102057">
    <property type="expression patterns" value="Expressed in primordial germ cell in gonad and 94 other cell types or tissues"/>
</dbReference>
<dbReference type="ExpressionAtlas" id="Q9NSA2">
    <property type="expression patterns" value="baseline and differential"/>
</dbReference>
<dbReference type="GO" id="GO:0043197">
    <property type="term" value="C:dendritic spine"/>
    <property type="evidence" value="ECO:0000318"/>
    <property type="project" value="GO_Central"/>
</dbReference>
<dbReference type="GO" id="GO:0043025">
    <property type="term" value="C:neuronal cell body"/>
    <property type="evidence" value="ECO:0000318"/>
    <property type="project" value="GO_Central"/>
</dbReference>
<dbReference type="GO" id="GO:0005886">
    <property type="term" value="C:plasma membrane"/>
    <property type="evidence" value="ECO:0000304"/>
    <property type="project" value="Reactome"/>
</dbReference>
<dbReference type="GO" id="GO:0045211">
    <property type="term" value="C:postsynaptic membrane"/>
    <property type="evidence" value="ECO:0000318"/>
    <property type="project" value="GO_Central"/>
</dbReference>
<dbReference type="GO" id="GO:0008076">
    <property type="term" value="C:voltage-gated potassium channel complex"/>
    <property type="evidence" value="ECO:0000318"/>
    <property type="project" value="GO_Central"/>
</dbReference>
<dbReference type="GO" id="GO:0005250">
    <property type="term" value="F:A-type (transient outward) potassium channel activity"/>
    <property type="evidence" value="ECO:0000314"/>
    <property type="project" value="UniProtKB"/>
</dbReference>
<dbReference type="GO" id="GO:0046872">
    <property type="term" value="F:metal ion binding"/>
    <property type="evidence" value="ECO:0007669"/>
    <property type="project" value="UniProtKB-KW"/>
</dbReference>
<dbReference type="GO" id="GO:0001508">
    <property type="term" value="P:action potential"/>
    <property type="evidence" value="ECO:0000318"/>
    <property type="project" value="GO_Central"/>
</dbReference>
<dbReference type="GO" id="GO:0071805">
    <property type="term" value="P:potassium ion transmembrane transport"/>
    <property type="evidence" value="ECO:0000318"/>
    <property type="project" value="GO_Central"/>
</dbReference>
<dbReference type="GO" id="GO:0051260">
    <property type="term" value="P:protein homooligomerization"/>
    <property type="evidence" value="ECO:0007669"/>
    <property type="project" value="InterPro"/>
</dbReference>
<dbReference type="FunFam" id="1.20.120.350:FF:000016">
    <property type="entry name" value="Potassium voltage-gated channel subfamily D member 3"/>
    <property type="match status" value="1"/>
</dbReference>
<dbReference type="FunFam" id="3.30.710.10:FF:000004">
    <property type="entry name" value="Potassium voltage-gated channel subfamily D member 3"/>
    <property type="match status" value="1"/>
</dbReference>
<dbReference type="FunFam" id="1.10.287.70:FF:000028">
    <property type="entry name" value="potassium voltage-gated channel subfamily D member 3"/>
    <property type="match status" value="1"/>
</dbReference>
<dbReference type="Gene3D" id="1.10.287.70">
    <property type="match status" value="1"/>
</dbReference>
<dbReference type="Gene3D" id="3.30.710.10">
    <property type="entry name" value="Potassium Channel Kv1.1, Chain A"/>
    <property type="match status" value="1"/>
</dbReference>
<dbReference type="Gene3D" id="1.20.120.350">
    <property type="entry name" value="Voltage-gated potassium channels. Chain C"/>
    <property type="match status" value="1"/>
</dbReference>
<dbReference type="InterPro" id="IPR000210">
    <property type="entry name" value="BTB/POZ_dom"/>
</dbReference>
<dbReference type="InterPro" id="IPR005821">
    <property type="entry name" value="Ion_trans_dom"/>
</dbReference>
<dbReference type="InterPro" id="IPR003968">
    <property type="entry name" value="K_chnl_volt-dep_Kv"/>
</dbReference>
<dbReference type="InterPro" id="IPR003975">
    <property type="entry name" value="K_chnl_volt-dep_Kv4"/>
</dbReference>
<dbReference type="InterPro" id="IPR004054">
    <property type="entry name" value="K_chnl_volt-dep_Kv4.1"/>
</dbReference>
<dbReference type="InterPro" id="IPR024587">
    <property type="entry name" value="K_chnl_volt-dep_Kv4_C"/>
</dbReference>
<dbReference type="InterPro" id="IPR021645">
    <property type="entry name" value="Shal-type_N"/>
</dbReference>
<dbReference type="InterPro" id="IPR011333">
    <property type="entry name" value="SKP1/BTB/POZ_sf"/>
</dbReference>
<dbReference type="InterPro" id="IPR003131">
    <property type="entry name" value="T1-type_BTB"/>
</dbReference>
<dbReference type="InterPro" id="IPR028325">
    <property type="entry name" value="VG_K_chnl"/>
</dbReference>
<dbReference type="InterPro" id="IPR027359">
    <property type="entry name" value="Volt_channel_dom_sf"/>
</dbReference>
<dbReference type="PANTHER" id="PTHR11537:SF174">
    <property type="entry name" value="POTASSIUM VOLTAGE-GATED CHANNEL SUBFAMILY D MEMBER 1"/>
    <property type="match status" value="1"/>
</dbReference>
<dbReference type="PANTHER" id="PTHR11537">
    <property type="entry name" value="VOLTAGE-GATED POTASSIUM CHANNEL"/>
    <property type="match status" value="1"/>
</dbReference>
<dbReference type="Pfam" id="PF02214">
    <property type="entry name" value="BTB_2"/>
    <property type="match status" value="1"/>
</dbReference>
<dbReference type="Pfam" id="PF11879">
    <property type="entry name" value="DUF3399"/>
    <property type="match status" value="1"/>
</dbReference>
<dbReference type="Pfam" id="PF00520">
    <property type="entry name" value="Ion_trans"/>
    <property type="match status" value="1"/>
</dbReference>
<dbReference type="Pfam" id="PF11601">
    <property type="entry name" value="Shal-type"/>
    <property type="match status" value="1"/>
</dbReference>
<dbReference type="PRINTS" id="PR00169">
    <property type="entry name" value="KCHANNEL"/>
</dbReference>
<dbReference type="PRINTS" id="PR01516">
    <property type="entry name" value="KV41CHANNEL"/>
</dbReference>
<dbReference type="PRINTS" id="PR01491">
    <property type="entry name" value="KVCHANNEL"/>
</dbReference>
<dbReference type="PRINTS" id="PR01497">
    <property type="entry name" value="SHALCHANNEL"/>
</dbReference>
<dbReference type="SMART" id="SM00225">
    <property type="entry name" value="BTB"/>
    <property type="match status" value="1"/>
</dbReference>
<dbReference type="SUPFAM" id="SSF54695">
    <property type="entry name" value="POZ domain"/>
    <property type="match status" value="1"/>
</dbReference>
<dbReference type="SUPFAM" id="SSF81324">
    <property type="entry name" value="Voltage-gated potassium channels"/>
    <property type="match status" value="1"/>
</dbReference>
<reference key="1">
    <citation type="journal article" date="2000" name="Genomics">
        <title>Gene structures and expression profiles of three human KCND (Kv4) potassium channels mediating A-type currents I(TO) and I(SA).</title>
        <authorList>
            <person name="Isbrandt D."/>
            <person name="Leicher T."/>
            <person name="Waldschuetz R."/>
            <person name="Zhu X.-R."/>
            <person name="Luhmann U."/>
            <person name="Michel U."/>
            <person name="Sauter K."/>
            <person name="Pongs O."/>
        </authorList>
    </citation>
    <scope>NUCLEOTIDE SEQUENCE [GENOMIC DNA / MRNA] (ISOFORM 1)</scope>
    <scope>TISSUE SPECIFICITY</scope>
    <source>
        <tissue>Embryonic kidney</tissue>
    </source>
</reference>
<reference key="2">
    <citation type="submission" date="1998-12" db="EMBL/GenBank/DDBJ databases">
        <title>Homo sapiens mRNA for shal-type potassium channel KCND1 (Kv4.1).</title>
        <authorList>
            <person name="Makita N."/>
            <person name="Shirai N."/>
            <person name="Sawa H."/>
            <person name="Sasaki K."/>
            <person name="Nagashima K."/>
            <person name="Yoshida M.C."/>
            <person name="Kitabatake A."/>
        </authorList>
    </citation>
    <scope>NUCLEOTIDE SEQUENCE [MRNA] (ISOFORM 1)</scope>
    <source>
        <tissue>Heart</tissue>
    </source>
</reference>
<reference key="3">
    <citation type="submission" date="1998-04" db="EMBL/GenBank/DDBJ databases">
        <title>Transcription map in Xp11.23.</title>
        <authorList>
            <person name="Strom T.M."/>
            <person name="Nyakatura G."/>
            <person name="Hellebrand H."/>
            <person name="Drescher B."/>
            <person name="Rosenthal A."/>
            <person name="Meindl A."/>
        </authorList>
    </citation>
    <scope>NUCLEOTIDE SEQUENCE [LARGE SCALE MRNA] (ISOFORM 1)</scope>
    <source>
        <tissue>Brain</tissue>
    </source>
</reference>
<reference key="4">
    <citation type="journal article" date="2004" name="Nat. Genet.">
        <title>Complete sequencing and characterization of 21,243 full-length human cDNAs.</title>
        <authorList>
            <person name="Ota T."/>
            <person name="Suzuki Y."/>
            <person name="Nishikawa T."/>
            <person name="Otsuki T."/>
            <person name="Sugiyama T."/>
            <person name="Irie R."/>
            <person name="Wakamatsu A."/>
            <person name="Hayashi K."/>
            <person name="Sato H."/>
            <person name="Nagai K."/>
            <person name="Kimura K."/>
            <person name="Makita H."/>
            <person name="Sekine M."/>
            <person name="Obayashi M."/>
            <person name="Nishi T."/>
            <person name="Shibahara T."/>
            <person name="Tanaka T."/>
            <person name="Ishii S."/>
            <person name="Yamamoto J."/>
            <person name="Saito K."/>
            <person name="Kawai Y."/>
            <person name="Isono Y."/>
            <person name="Nakamura Y."/>
            <person name="Nagahari K."/>
            <person name="Murakami K."/>
            <person name="Yasuda T."/>
            <person name="Iwayanagi T."/>
            <person name="Wagatsuma M."/>
            <person name="Shiratori A."/>
            <person name="Sudo H."/>
            <person name="Hosoiri T."/>
            <person name="Kaku Y."/>
            <person name="Kodaira H."/>
            <person name="Kondo H."/>
            <person name="Sugawara M."/>
            <person name="Takahashi M."/>
            <person name="Kanda K."/>
            <person name="Yokoi T."/>
            <person name="Furuya T."/>
            <person name="Kikkawa E."/>
            <person name="Omura Y."/>
            <person name="Abe K."/>
            <person name="Kamihara K."/>
            <person name="Katsuta N."/>
            <person name="Sato K."/>
            <person name="Tanikawa M."/>
            <person name="Yamazaki M."/>
            <person name="Ninomiya K."/>
            <person name="Ishibashi T."/>
            <person name="Yamashita H."/>
            <person name="Murakawa K."/>
            <person name="Fujimori K."/>
            <person name="Tanai H."/>
            <person name="Kimata M."/>
            <person name="Watanabe M."/>
            <person name="Hiraoka S."/>
            <person name="Chiba Y."/>
            <person name="Ishida S."/>
            <person name="Ono Y."/>
            <person name="Takiguchi S."/>
            <person name="Watanabe S."/>
            <person name="Yosida M."/>
            <person name="Hotuta T."/>
            <person name="Kusano J."/>
            <person name="Kanehori K."/>
            <person name="Takahashi-Fujii A."/>
            <person name="Hara H."/>
            <person name="Tanase T.-O."/>
            <person name="Nomura Y."/>
            <person name="Togiya S."/>
            <person name="Komai F."/>
            <person name="Hara R."/>
            <person name="Takeuchi K."/>
            <person name="Arita M."/>
            <person name="Imose N."/>
            <person name="Musashino K."/>
            <person name="Yuuki H."/>
            <person name="Oshima A."/>
            <person name="Sasaki N."/>
            <person name="Aotsuka S."/>
            <person name="Yoshikawa Y."/>
            <person name="Matsunawa H."/>
            <person name="Ichihara T."/>
            <person name="Shiohata N."/>
            <person name="Sano S."/>
            <person name="Moriya S."/>
            <person name="Momiyama H."/>
            <person name="Satoh N."/>
            <person name="Takami S."/>
            <person name="Terashima Y."/>
            <person name="Suzuki O."/>
            <person name="Nakagawa S."/>
            <person name="Senoh A."/>
            <person name="Mizoguchi H."/>
            <person name="Goto Y."/>
            <person name="Shimizu F."/>
            <person name="Wakebe H."/>
            <person name="Hishigaki H."/>
            <person name="Watanabe T."/>
            <person name="Sugiyama A."/>
            <person name="Takemoto M."/>
            <person name="Kawakami B."/>
            <person name="Yamazaki M."/>
            <person name="Watanabe K."/>
            <person name="Kumagai A."/>
            <person name="Itakura S."/>
            <person name="Fukuzumi Y."/>
            <person name="Fujimori Y."/>
            <person name="Komiyama M."/>
            <person name="Tashiro H."/>
            <person name="Tanigami A."/>
            <person name="Fujiwara T."/>
            <person name="Ono T."/>
            <person name="Yamada K."/>
            <person name="Fujii Y."/>
            <person name="Ozaki K."/>
            <person name="Hirao M."/>
            <person name="Ohmori Y."/>
            <person name="Kawabata A."/>
            <person name="Hikiji T."/>
            <person name="Kobatake N."/>
            <person name="Inagaki H."/>
            <person name="Ikema Y."/>
            <person name="Okamoto S."/>
            <person name="Okitani R."/>
            <person name="Kawakami T."/>
            <person name="Noguchi S."/>
            <person name="Itoh T."/>
            <person name="Shigeta K."/>
            <person name="Senba T."/>
            <person name="Matsumura K."/>
            <person name="Nakajima Y."/>
            <person name="Mizuno T."/>
            <person name="Morinaga M."/>
            <person name="Sasaki M."/>
            <person name="Togashi T."/>
            <person name="Oyama M."/>
            <person name="Hata H."/>
            <person name="Watanabe M."/>
            <person name="Komatsu T."/>
            <person name="Mizushima-Sugano J."/>
            <person name="Satoh T."/>
            <person name="Shirai Y."/>
            <person name="Takahashi Y."/>
            <person name="Nakagawa K."/>
            <person name="Okumura K."/>
            <person name="Nagase T."/>
            <person name="Nomura N."/>
            <person name="Kikuchi H."/>
            <person name="Masuho Y."/>
            <person name="Yamashita R."/>
            <person name="Nakai K."/>
            <person name="Yada T."/>
            <person name="Nakamura Y."/>
            <person name="Ohara O."/>
            <person name="Isogai T."/>
            <person name="Sugano S."/>
        </authorList>
    </citation>
    <scope>NUCLEOTIDE SEQUENCE [LARGE SCALE MRNA] (ISOFORMS 1 AND 2)</scope>
    <source>
        <tissue>Cerebellum</tissue>
    </source>
</reference>
<reference key="5">
    <citation type="journal article" date="2005" name="Nature">
        <title>The DNA sequence of the human X chromosome.</title>
        <authorList>
            <person name="Ross M.T."/>
            <person name="Grafham D.V."/>
            <person name="Coffey A.J."/>
            <person name="Scherer S."/>
            <person name="McLay K."/>
            <person name="Muzny D."/>
            <person name="Platzer M."/>
            <person name="Howell G.R."/>
            <person name="Burrows C."/>
            <person name="Bird C.P."/>
            <person name="Frankish A."/>
            <person name="Lovell F.L."/>
            <person name="Howe K.L."/>
            <person name="Ashurst J.L."/>
            <person name="Fulton R.S."/>
            <person name="Sudbrak R."/>
            <person name="Wen G."/>
            <person name="Jones M.C."/>
            <person name="Hurles M.E."/>
            <person name="Andrews T.D."/>
            <person name="Scott C.E."/>
            <person name="Searle S."/>
            <person name="Ramser J."/>
            <person name="Whittaker A."/>
            <person name="Deadman R."/>
            <person name="Carter N.P."/>
            <person name="Hunt S.E."/>
            <person name="Chen R."/>
            <person name="Cree A."/>
            <person name="Gunaratne P."/>
            <person name="Havlak P."/>
            <person name="Hodgson A."/>
            <person name="Metzker M.L."/>
            <person name="Richards S."/>
            <person name="Scott G."/>
            <person name="Steffen D."/>
            <person name="Sodergren E."/>
            <person name="Wheeler D.A."/>
            <person name="Worley K.C."/>
            <person name="Ainscough R."/>
            <person name="Ambrose K.D."/>
            <person name="Ansari-Lari M.A."/>
            <person name="Aradhya S."/>
            <person name="Ashwell R.I."/>
            <person name="Babbage A.K."/>
            <person name="Bagguley C.L."/>
            <person name="Ballabio A."/>
            <person name="Banerjee R."/>
            <person name="Barker G.E."/>
            <person name="Barlow K.F."/>
            <person name="Barrett I.P."/>
            <person name="Bates K.N."/>
            <person name="Beare D.M."/>
            <person name="Beasley H."/>
            <person name="Beasley O."/>
            <person name="Beck A."/>
            <person name="Bethel G."/>
            <person name="Blechschmidt K."/>
            <person name="Brady N."/>
            <person name="Bray-Allen S."/>
            <person name="Bridgeman A.M."/>
            <person name="Brown A.J."/>
            <person name="Brown M.J."/>
            <person name="Bonnin D."/>
            <person name="Bruford E.A."/>
            <person name="Buhay C."/>
            <person name="Burch P."/>
            <person name="Burford D."/>
            <person name="Burgess J."/>
            <person name="Burrill W."/>
            <person name="Burton J."/>
            <person name="Bye J.M."/>
            <person name="Carder C."/>
            <person name="Carrel L."/>
            <person name="Chako J."/>
            <person name="Chapman J.C."/>
            <person name="Chavez D."/>
            <person name="Chen E."/>
            <person name="Chen G."/>
            <person name="Chen Y."/>
            <person name="Chen Z."/>
            <person name="Chinault C."/>
            <person name="Ciccodicola A."/>
            <person name="Clark S.Y."/>
            <person name="Clarke G."/>
            <person name="Clee C.M."/>
            <person name="Clegg S."/>
            <person name="Clerc-Blankenburg K."/>
            <person name="Clifford K."/>
            <person name="Cobley V."/>
            <person name="Cole C.G."/>
            <person name="Conquer J.S."/>
            <person name="Corby N."/>
            <person name="Connor R.E."/>
            <person name="David R."/>
            <person name="Davies J."/>
            <person name="Davis C."/>
            <person name="Davis J."/>
            <person name="Delgado O."/>
            <person name="Deshazo D."/>
            <person name="Dhami P."/>
            <person name="Ding Y."/>
            <person name="Dinh H."/>
            <person name="Dodsworth S."/>
            <person name="Draper H."/>
            <person name="Dugan-Rocha S."/>
            <person name="Dunham A."/>
            <person name="Dunn M."/>
            <person name="Durbin K.J."/>
            <person name="Dutta I."/>
            <person name="Eades T."/>
            <person name="Ellwood M."/>
            <person name="Emery-Cohen A."/>
            <person name="Errington H."/>
            <person name="Evans K.L."/>
            <person name="Faulkner L."/>
            <person name="Francis F."/>
            <person name="Frankland J."/>
            <person name="Fraser A.E."/>
            <person name="Galgoczy P."/>
            <person name="Gilbert J."/>
            <person name="Gill R."/>
            <person name="Gloeckner G."/>
            <person name="Gregory S.G."/>
            <person name="Gribble S."/>
            <person name="Griffiths C."/>
            <person name="Grocock R."/>
            <person name="Gu Y."/>
            <person name="Gwilliam R."/>
            <person name="Hamilton C."/>
            <person name="Hart E.A."/>
            <person name="Hawes A."/>
            <person name="Heath P.D."/>
            <person name="Heitmann K."/>
            <person name="Hennig S."/>
            <person name="Hernandez J."/>
            <person name="Hinzmann B."/>
            <person name="Ho S."/>
            <person name="Hoffs M."/>
            <person name="Howden P.J."/>
            <person name="Huckle E.J."/>
            <person name="Hume J."/>
            <person name="Hunt P.J."/>
            <person name="Hunt A.R."/>
            <person name="Isherwood J."/>
            <person name="Jacob L."/>
            <person name="Johnson D."/>
            <person name="Jones S."/>
            <person name="de Jong P.J."/>
            <person name="Joseph S.S."/>
            <person name="Keenan S."/>
            <person name="Kelly S."/>
            <person name="Kershaw J.K."/>
            <person name="Khan Z."/>
            <person name="Kioschis P."/>
            <person name="Klages S."/>
            <person name="Knights A.J."/>
            <person name="Kosiura A."/>
            <person name="Kovar-Smith C."/>
            <person name="Laird G.K."/>
            <person name="Langford C."/>
            <person name="Lawlor S."/>
            <person name="Leversha M."/>
            <person name="Lewis L."/>
            <person name="Liu W."/>
            <person name="Lloyd C."/>
            <person name="Lloyd D.M."/>
            <person name="Loulseged H."/>
            <person name="Loveland J.E."/>
            <person name="Lovell J.D."/>
            <person name="Lozado R."/>
            <person name="Lu J."/>
            <person name="Lyne R."/>
            <person name="Ma J."/>
            <person name="Maheshwari M."/>
            <person name="Matthews L.H."/>
            <person name="McDowall J."/>
            <person name="McLaren S."/>
            <person name="McMurray A."/>
            <person name="Meidl P."/>
            <person name="Meitinger T."/>
            <person name="Milne S."/>
            <person name="Miner G."/>
            <person name="Mistry S.L."/>
            <person name="Morgan M."/>
            <person name="Morris S."/>
            <person name="Mueller I."/>
            <person name="Mullikin J.C."/>
            <person name="Nguyen N."/>
            <person name="Nordsiek G."/>
            <person name="Nyakatura G."/>
            <person name="O'dell C.N."/>
            <person name="Okwuonu G."/>
            <person name="Palmer S."/>
            <person name="Pandian R."/>
            <person name="Parker D."/>
            <person name="Parrish J."/>
            <person name="Pasternak S."/>
            <person name="Patel D."/>
            <person name="Pearce A.V."/>
            <person name="Pearson D.M."/>
            <person name="Pelan S.E."/>
            <person name="Perez L."/>
            <person name="Porter K.M."/>
            <person name="Ramsey Y."/>
            <person name="Reichwald K."/>
            <person name="Rhodes S."/>
            <person name="Ridler K.A."/>
            <person name="Schlessinger D."/>
            <person name="Schueler M.G."/>
            <person name="Sehra H.K."/>
            <person name="Shaw-Smith C."/>
            <person name="Shen H."/>
            <person name="Sheridan E.M."/>
            <person name="Shownkeen R."/>
            <person name="Skuce C.D."/>
            <person name="Smith M.L."/>
            <person name="Sotheran E.C."/>
            <person name="Steingruber H.E."/>
            <person name="Steward C.A."/>
            <person name="Storey R."/>
            <person name="Swann R.M."/>
            <person name="Swarbreck D."/>
            <person name="Tabor P.E."/>
            <person name="Taudien S."/>
            <person name="Taylor T."/>
            <person name="Teague B."/>
            <person name="Thomas K."/>
            <person name="Thorpe A."/>
            <person name="Timms K."/>
            <person name="Tracey A."/>
            <person name="Trevanion S."/>
            <person name="Tromans A.C."/>
            <person name="d'Urso M."/>
            <person name="Verduzco D."/>
            <person name="Villasana D."/>
            <person name="Waldron L."/>
            <person name="Wall M."/>
            <person name="Wang Q."/>
            <person name="Warren J."/>
            <person name="Warry G.L."/>
            <person name="Wei X."/>
            <person name="West A."/>
            <person name="Whitehead S.L."/>
            <person name="Whiteley M.N."/>
            <person name="Wilkinson J.E."/>
            <person name="Willey D.L."/>
            <person name="Williams G."/>
            <person name="Williams L."/>
            <person name="Williamson A."/>
            <person name="Williamson H."/>
            <person name="Wilming L."/>
            <person name="Woodmansey R.L."/>
            <person name="Wray P.W."/>
            <person name="Yen J."/>
            <person name="Zhang J."/>
            <person name="Zhou J."/>
            <person name="Zoghbi H."/>
            <person name="Zorilla S."/>
            <person name="Buck D."/>
            <person name="Reinhardt R."/>
            <person name="Poustka A."/>
            <person name="Rosenthal A."/>
            <person name="Lehrach H."/>
            <person name="Meindl A."/>
            <person name="Minx P.J."/>
            <person name="Hillier L.W."/>
            <person name="Willard H.F."/>
            <person name="Wilson R.K."/>
            <person name="Waterston R.H."/>
            <person name="Rice C.M."/>
            <person name="Vaudin M."/>
            <person name="Coulson A."/>
            <person name="Nelson D.L."/>
            <person name="Weinstock G."/>
            <person name="Sulston J.E."/>
            <person name="Durbin R.M."/>
            <person name="Hubbard T."/>
            <person name="Gibbs R.A."/>
            <person name="Beck S."/>
            <person name="Rogers J."/>
            <person name="Bentley D.R."/>
        </authorList>
    </citation>
    <scope>NUCLEOTIDE SEQUENCE [LARGE SCALE GENOMIC DNA]</scope>
</reference>
<reference key="6">
    <citation type="submission" date="2005-07" db="EMBL/GenBank/DDBJ databases">
        <authorList>
            <person name="Mural R.J."/>
            <person name="Istrail S."/>
            <person name="Sutton G.G."/>
            <person name="Florea L."/>
            <person name="Halpern A.L."/>
            <person name="Mobarry C.M."/>
            <person name="Lippert R."/>
            <person name="Walenz B."/>
            <person name="Shatkay H."/>
            <person name="Dew I."/>
            <person name="Miller J.R."/>
            <person name="Flanigan M.J."/>
            <person name="Edwards N.J."/>
            <person name="Bolanos R."/>
            <person name="Fasulo D."/>
            <person name="Halldorsson B.V."/>
            <person name="Hannenhalli S."/>
            <person name="Turner R."/>
            <person name="Yooseph S."/>
            <person name="Lu F."/>
            <person name="Nusskern D.R."/>
            <person name="Shue B.C."/>
            <person name="Zheng X.H."/>
            <person name="Zhong F."/>
            <person name="Delcher A.L."/>
            <person name="Huson D.H."/>
            <person name="Kravitz S.A."/>
            <person name="Mouchard L."/>
            <person name="Reinert K."/>
            <person name="Remington K.A."/>
            <person name="Clark A.G."/>
            <person name="Waterman M.S."/>
            <person name="Eichler E.E."/>
            <person name="Adams M.D."/>
            <person name="Hunkapiller M.W."/>
            <person name="Myers E.W."/>
            <person name="Venter J.C."/>
        </authorList>
    </citation>
    <scope>NUCLEOTIDE SEQUENCE [LARGE SCALE GENOMIC DNA]</scope>
</reference>
<reference key="7">
    <citation type="journal article" date="2004" name="Genome Res.">
        <title>The status, quality, and expansion of the NIH full-length cDNA project: the Mammalian Gene Collection (MGC).</title>
        <authorList>
            <consortium name="The MGC Project Team"/>
        </authorList>
    </citation>
    <scope>NUCLEOTIDE SEQUENCE [LARGE SCALE MRNA] (ISOFORM 1)</scope>
    <source>
        <tissue>Testis</tissue>
    </source>
</reference>
<reference key="8">
    <citation type="journal article" date="2004" name="Biophys. J.">
        <title>Modulation of Kv4.2 channel expression and gating by dipeptidyl peptidase 10 (DPP10).</title>
        <authorList>
            <person name="Jerng H.H."/>
            <person name="Qian Y."/>
            <person name="Pfaffinger P.J."/>
        </authorList>
    </citation>
    <scope>FUNCTION</scope>
    <scope>TRANSPORTER ACTIVITY</scope>
</reference>
<accession>Q9NSA2</accession>
<accession>A6NEF1</accession>
<accession>B2RCG0</accession>
<accession>O75671</accession>
<keyword id="KW-0025">Alternative splicing</keyword>
<keyword id="KW-1003">Cell membrane</keyword>
<keyword id="KW-0325">Glycoprotein</keyword>
<keyword id="KW-0407">Ion channel</keyword>
<keyword id="KW-0406">Ion transport</keyword>
<keyword id="KW-0472">Membrane</keyword>
<keyword id="KW-0479">Metal-binding</keyword>
<keyword id="KW-0597">Phosphoprotein</keyword>
<keyword id="KW-0630">Potassium</keyword>
<keyword id="KW-0631">Potassium channel</keyword>
<keyword id="KW-0633">Potassium transport</keyword>
<keyword id="KW-1267">Proteomics identification</keyword>
<keyword id="KW-1185">Reference proteome</keyword>
<keyword id="KW-0812">Transmembrane</keyword>
<keyword id="KW-1133">Transmembrane helix</keyword>
<keyword id="KW-0813">Transport</keyword>
<keyword id="KW-0851">Voltage-gated channel</keyword>
<keyword id="KW-0862">Zinc</keyword>
<feature type="chain" id="PRO_0000054061" description="A-type voltage-gated potassium channel KCND1">
    <location>
        <begin position="1"/>
        <end position="647"/>
    </location>
</feature>
<feature type="topological domain" description="Cytoplasmic" evidence="1">
    <location>
        <begin position="1"/>
        <end position="183"/>
    </location>
</feature>
<feature type="transmembrane region" description="Helical; Name=Segment S1" evidence="1">
    <location>
        <begin position="184"/>
        <end position="205"/>
    </location>
</feature>
<feature type="topological domain" description="Extracellular" evidence="1">
    <location>
        <begin position="206"/>
        <end position="230"/>
    </location>
</feature>
<feature type="transmembrane region" description="Helical; Name=Segment S2" evidence="1">
    <location>
        <begin position="231"/>
        <end position="252"/>
    </location>
</feature>
<feature type="topological domain" description="Cytoplasmic" evidence="1">
    <location>
        <begin position="253"/>
        <end position="263"/>
    </location>
</feature>
<feature type="transmembrane region" description="Helical; Name=Segment S3" evidence="1">
    <location>
        <begin position="264"/>
        <end position="284"/>
    </location>
</feature>
<feature type="topological domain" description="Extracellular" evidence="1">
    <location>
        <begin position="285"/>
        <end position="287"/>
    </location>
</feature>
<feature type="transmembrane region" description="Helical; Voltage-sensor; Name=Segment S4" evidence="1">
    <location>
        <begin position="288"/>
        <end position="308"/>
    </location>
</feature>
<feature type="topological domain" description="Cytoplasmic" evidence="1">
    <location>
        <begin position="309"/>
        <end position="323"/>
    </location>
</feature>
<feature type="transmembrane region" description="Helical; Name=Segment S5" evidence="1">
    <location>
        <begin position="324"/>
        <end position="345"/>
    </location>
</feature>
<feature type="topological domain" description="Extracellular" evidence="1">
    <location>
        <begin position="346"/>
        <end position="359"/>
    </location>
</feature>
<feature type="intramembrane region" description="Helical; Name=Pore helix" evidence="1">
    <location>
        <begin position="360"/>
        <end position="371"/>
    </location>
</feature>
<feature type="intramembrane region" evidence="1">
    <location>
        <begin position="372"/>
        <end position="379"/>
    </location>
</feature>
<feature type="topological domain" description="Extracellular" evidence="1">
    <location>
        <begin position="380"/>
        <end position="386"/>
    </location>
</feature>
<feature type="transmembrane region" description="Helical; Name=Segment S6" evidence="1">
    <location>
        <begin position="387"/>
        <end position="415"/>
    </location>
</feature>
<feature type="topological domain" description="Cytoplasmic" evidence="1">
    <location>
        <begin position="416"/>
        <end position="647"/>
    </location>
</feature>
<feature type="region of interest" description="Interaction with KCNIP1, KCNIP2, and other family members" evidence="4">
    <location>
        <begin position="2"/>
        <end position="20"/>
    </location>
</feature>
<feature type="region of interest" description="Disordered" evidence="7">
    <location>
        <begin position="144"/>
        <end position="163"/>
    </location>
</feature>
<feature type="region of interest" description="S4-S5 linker" evidence="1">
    <location>
        <begin position="310"/>
        <end position="323"/>
    </location>
</feature>
<feature type="region of interest" description="Required for dendritic targeting" evidence="4">
    <location>
        <begin position="474"/>
        <end position="489"/>
    </location>
</feature>
<feature type="region of interest" description="Disordered" evidence="7">
    <location>
        <begin position="506"/>
        <end position="531"/>
    </location>
</feature>
<feature type="region of interest" description="Disordered" evidence="7">
    <location>
        <begin position="601"/>
        <end position="634"/>
    </location>
</feature>
<feature type="short sequence motif" description="Selectivity filter" evidence="1">
    <location>
        <begin position="372"/>
        <end position="377"/>
    </location>
</feature>
<feature type="compositionally biased region" description="Low complexity" evidence="7">
    <location>
        <begin position="506"/>
        <end position="524"/>
    </location>
</feature>
<feature type="binding site" evidence="4">
    <location>
        <position position="104"/>
    </location>
    <ligand>
        <name>Zn(2+)</name>
        <dbReference type="ChEBI" id="CHEBI:29105"/>
    </ligand>
</feature>
<feature type="binding site" evidence="4">
    <location>
        <position position="131"/>
    </location>
    <ligand>
        <name>Zn(2+)</name>
        <dbReference type="ChEBI" id="CHEBI:29105"/>
    </ligand>
</feature>
<feature type="binding site" evidence="4">
    <location>
        <position position="132"/>
    </location>
    <ligand>
        <name>Zn(2+)</name>
        <dbReference type="ChEBI" id="CHEBI:29105"/>
    </ligand>
</feature>
<feature type="modified residue" description="Phosphoserine" evidence="2">
    <location>
        <position position="458"/>
    </location>
</feature>
<feature type="modified residue" description="Phosphoserine" evidence="3">
    <location>
        <position position="555"/>
    </location>
</feature>
<feature type="glycosylation site" description="N-linked (GlcNAc...) asparagine" evidence="6">
    <location>
        <position position="352"/>
    </location>
</feature>
<feature type="glycosylation site" description="N-linked (GlcNAc...) asparagine" evidence="6">
    <location>
        <position position="355"/>
    </location>
</feature>
<feature type="splice variant" id="VSP_057040" description="In isoform 2." evidence="10">
    <location>
        <begin position="1"/>
        <end position="377"/>
    </location>
</feature>
<feature type="sequence conflict" description="In Ref. 2; BAA96454." evidence="12" ref="2">
    <original>S</original>
    <variation>N</variation>
    <location>
        <position position="358"/>
    </location>
</feature>
<feature type="sequence conflict" description="In Ref. 2; BAA96454." evidence="12" ref="2">
    <original>V</original>
    <variation>I</variation>
    <location>
        <position position="406"/>
    </location>
</feature>
<gene>
    <name evidence="13" type="primary">KCND1</name>
</gene>
<comment type="function">
    <text evidence="2 9">A-type voltage-gated potassium channel that mediates transmembrane potassium transport in excitable membranes in the brain (PubMed:15454437). Mediates A-type current I(SA) in suprachiasmatic nucleus (SCN) neurons. Exhibits a low-threshold A-type current with a hyperpolarized steady-state inactivation midpoint and the recovery process was steeply voltage-dependent, with recovery being markedly faster at more negative potentials. May regulates repetitive firing rates in the suprachiasmatic nucleus (SCN) neurons and circadian rhythms in neuronal excitability and behavior. Contributes to the regulation of the circadian rhythm of action potential firing in suprachiasmatic nucleus neurons, which regulates the circadian rhythm of locomotor activity. The regulatory subunit KCNIP1 modulates the kinetics of channel inactivation, increases the current amplitudes and accelerates recovery from inactivation, shifts activation in a depolarizing direction (By similarity). The regulatory subunit DPP10 decreases the voltage sensitivity of the inactivation channel gating (PubMed:15454437).</text>
</comment>
<comment type="catalytic activity">
    <reaction evidence="9">
        <text>K(+)(in) = K(+)(out)</text>
        <dbReference type="Rhea" id="RHEA:29463"/>
        <dbReference type="ChEBI" id="CHEBI:29103"/>
    </reaction>
</comment>
<comment type="subunit">
    <text evidence="2">Component of heteromultimeric potassium channels. Identified in potassium channel complexes containing KCND1, KCND2, KCND3, KCNIP1, KCNIP2, KCNIP3, KCNIP4, DPP6 and DPP10.</text>
</comment>
<comment type="subcellular location">
    <subcellularLocation>
        <location evidence="5">Cell membrane</location>
        <topology evidence="5">Multi-pass membrane protein</topology>
    </subcellularLocation>
</comment>
<comment type="alternative products">
    <event type="alternative splicing"/>
    <isoform>
        <id>Q9NSA2-1</id>
        <name>1</name>
        <sequence type="displayed"/>
    </isoform>
    <isoform>
        <id>Q9NSA2-2</id>
        <name>2</name>
        <sequence type="described" ref="VSP_057040"/>
    </isoform>
</comment>
<comment type="tissue specificity">
    <text evidence="8">Widely expressed. Highly expressed in brain, in particular in cerebellum and thalamus; detected at lower levels in the other parts of the brain.</text>
</comment>
<comment type="domain">
    <text evidence="1">The transmembrane segment S4 functions as a voltage-sensor and is characterized by a series of positively charged amino acids at every third position. Channel opening and closing is effected by a conformation change that affects the position and orientation of the voltage-sensor paddle formed by S3 and S4 within the membrane. A transmembrane electric field that is positive inside would push the positively charged S4 segment outwards, thereby opening the pore, while a field that is negative inside would pull the S4 segment inwards and close the pore. Changes in the position and orientation of S4 are then transmitted to the activation gate formed by the inner helix bundle via the S4-S5 linker region.</text>
</comment>
<comment type="domain">
    <text evidence="4 5">The zinc binding sites in the N-terminal domain are important for tetramerization and assembly of a functional channel complex (By similarity). Most likely, the channel undergoes closed-state inactivation, where a subtle conformation change would render the protein less sensitive to activation (By similarity).</text>
</comment>
<comment type="similarity">
    <text evidence="12">Belongs to the potassium channel family. D (Shal) (TC 1.A.1.2) subfamily. Kv4.1/KCND1 sub-subfamily.</text>
</comment>
<evidence type="ECO:0000250" key="1">
    <source>
        <dbReference type="UniProtKB" id="P63142"/>
    </source>
</evidence>
<evidence type="ECO:0000250" key="2">
    <source>
        <dbReference type="UniProtKB" id="Q03719"/>
    </source>
</evidence>
<evidence type="ECO:0000250" key="3">
    <source>
        <dbReference type="UniProtKB" id="Q62897"/>
    </source>
</evidence>
<evidence type="ECO:0000250" key="4">
    <source>
        <dbReference type="UniProtKB" id="Q63881"/>
    </source>
</evidence>
<evidence type="ECO:0000250" key="5">
    <source>
        <dbReference type="UniProtKB" id="Q9NZV8"/>
    </source>
</evidence>
<evidence type="ECO:0000255" key="6"/>
<evidence type="ECO:0000256" key="7">
    <source>
        <dbReference type="SAM" id="MobiDB-lite"/>
    </source>
</evidence>
<evidence type="ECO:0000269" key="8">
    <source>
    </source>
</evidence>
<evidence type="ECO:0000269" key="9">
    <source>
    </source>
</evidence>
<evidence type="ECO:0000303" key="10">
    <source>
    </source>
</evidence>
<evidence type="ECO:0000303" key="11">
    <source ref="2"/>
</evidence>
<evidence type="ECO:0000305" key="12"/>
<evidence type="ECO:0000312" key="13">
    <source>
        <dbReference type="HGNC" id="HGNC:6237"/>
    </source>
</evidence>
<sequence length="647" mass="71330">MAAGLATWLPFARAAAVGWLPLAQQPLPPAPGVKASRGDEVLVVNVSGRRFETWKNTLDRYPDTLLGSSEKEFFYDADSGEYFFDRDPDMFRHVLNFYRTGRLHCPRQECIQAFDEELAFYGLVPELVGDCCLEEYRDRKKENAERLAEDEEAEQAGDGPALPAGSSLRQRLWRAFENPHTSTAALVFYYVTGFFIAVSVIANVVETIPCRGSARRSSREQPCGERFPQAFFCMDTACVLIFTGEYLLRLFAAPSRCRFLRSVMSLIDVVAILPYYIGLLVPKNDDVSGAFVTLRVFRVFRIFKFSRHSQGLRILGYTLKSCASELGFLLFSLTMAIIIFATVMFYAEKGTNKTNFTSIPAAFWYTIVTMTTLGYGDMVPSTIAGKIFGSICSLSGVLVIALPVPVIVSNFSRIYHQNQRADKRRAQQKVRLARIRLAKSGTTNAFLQYKQNGGLEDSGSGEEQALCVRNRSAFEQQHHHLLHCLEKTTCHEFTDELTFSEALGAVSPGGRTSRSTSVSSQPVGPGSLLSSCCPRRAKRRAIRLANSTASVSRGSMQELDMLAGLRRSHAPQSRSSLNAKPHDSLDLNCDSRDFVAAIISIPTPPANTPDESQPSSPGGGGRAGSTLRNSSLGTPCLFPETVKISSL</sequence>
<name>KCND1_HUMAN</name>
<protein>
    <recommendedName>
        <fullName evidence="12">A-type voltage-gated potassium channel KCND1</fullName>
    </recommendedName>
    <alternativeName>
        <fullName evidence="12">Potassium voltage-gated channel subfamily D member 1</fullName>
    </alternativeName>
    <alternativeName>
        <fullName evidence="11">Shal-type potassium channel KCND1</fullName>
    </alternativeName>
    <alternativeName>
        <fullName>Voltage-gated potassium channel subunit Kv4.1</fullName>
    </alternativeName>
</protein>
<proteinExistence type="evidence at protein level"/>
<organism>
    <name type="scientific">Homo sapiens</name>
    <name type="common">Human</name>
    <dbReference type="NCBI Taxonomy" id="9606"/>
    <lineage>
        <taxon>Eukaryota</taxon>
        <taxon>Metazoa</taxon>
        <taxon>Chordata</taxon>
        <taxon>Craniata</taxon>
        <taxon>Vertebrata</taxon>
        <taxon>Euteleostomi</taxon>
        <taxon>Mammalia</taxon>
        <taxon>Eutheria</taxon>
        <taxon>Euarchontoglires</taxon>
        <taxon>Primates</taxon>
        <taxon>Haplorrhini</taxon>
        <taxon>Catarrhini</taxon>
        <taxon>Hominidae</taxon>
        <taxon>Homo</taxon>
    </lineage>
</organism>